<dbReference type="EC" id="6.2.1.3"/>
<dbReference type="EMBL" id="AF503752">
    <property type="protein sequence ID" value="AAM28869.1"/>
    <property type="molecule type" value="mRNA"/>
</dbReference>
<dbReference type="EMBL" id="AC007504">
    <property type="protein sequence ID" value="AAD43157.1"/>
    <property type="molecule type" value="Genomic_DNA"/>
</dbReference>
<dbReference type="EMBL" id="CP002684">
    <property type="protein sequence ID" value="AEE32429.1"/>
    <property type="molecule type" value="Genomic_DNA"/>
</dbReference>
<dbReference type="EMBL" id="AY065424">
    <property type="protein sequence ID" value="AAL38865.1"/>
    <property type="molecule type" value="mRNA"/>
</dbReference>
<dbReference type="EMBL" id="AY094420">
    <property type="protein sequence ID" value="AAM19793.1"/>
    <property type="molecule type" value="mRNA"/>
</dbReference>
<dbReference type="EMBL" id="BT001970">
    <property type="protein sequence ID" value="AAN71969.1"/>
    <property type="molecule type" value="mRNA"/>
</dbReference>
<dbReference type="PIR" id="G96530">
    <property type="entry name" value="G96530"/>
</dbReference>
<dbReference type="RefSeq" id="NP_175368.2">
    <property type="nucleotide sequence ID" value="NM_103833.5"/>
</dbReference>
<dbReference type="SMR" id="Q9XIA9"/>
<dbReference type="FunCoup" id="Q9XIA9">
    <property type="interactions" value="164"/>
</dbReference>
<dbReference type="STRING" id="3702.Q9XIA9"/>
<dbReference type="TCDB" id="4.C.1.1.14">
    <property type="family name" value="the fatty acid group translocation (fat) family"/>
</dbReference>
<dbReference type="GlyGen" id="Q9XIA9">
    <property type="glycosylation" value="1 site"/>
</dbReference>
<dbReference type="iPTMnet" id="Q9XIA9"/>
<dbReference type="PaxDb" id="3702-AT1G49430.1"/>
<dbReference type="ProteomicsDB" id="237070"/>
<dbReference type="EnsemblPlants" id="AT1G49430.1">
    <property type="protein sequence ID" value="AT1G49430.1"/>
    <property type="gene ID" value="AT1G49430"/>
</dbReference>
<dbReference type="GeneID" id="841367"/>
<dbReference type="Gramene" id="AT1G49430.1">
    <property type="protein sequence ID" value="AT1G49430.1"/>
    <property type="gene ID" value="AT1G49430"/>
</dbReference>
<dbReference type="KEGG" id="ath:AT1G49430"/>
<dbReference type="Araport" id="AT1G49430"/>
<dbReference type="TAIR" id="AT1G49430">
    <property type="gene designation" value="LACS2"/>
</dbReference>
<dbReference type="eggNOG" id="KOG1256">
    <property type="taxonomic scope" value="Eukaryota"/>
</dbReference>
<dbReference type="HOGENOM" id="CLU_000022_45_4_1"/>
<dbReference type="InParanoid" id="Q9XIA9"/>
<dbReference type="OMA" id="EWIVRDS"/>
<dbReference type="OrthoDB" id="1700726at2759"/>
<dbReference type="PhylomeDB" id="Q9XIA9"/>
<dbReference type="BioCyc" id="ARA:AT1G49430-MONOMER"/>
<dbReference type="BioCyc" id="MetaCyc:AT1G49430-MONOMER"/>
<dbReference type="SABIO-RK" id="Q9XIA9"/>
<dbReference type="UniPathway" id="UPA00199"/>
<dbReference type="PRO" id="PR:Q9XIA9"/>
<dbReference type="Proteomes" id="UP000006548">
    <property type="component" value="Chromosome 1"/>
</dbReference>
<dbReference type="ExpressionAtlas" id="Q9XIA9">
    <property type="expression patterns" value="baseline and differential"/>
</dbReference>
<dbReference type="GO" id="GO:0005783">
    <property type="term" value="C:endoplasmic reticulum"/>
    <property type="evidence" value="ECO:0000314"/>
    <property type="project" value="UniProtKB"/>
</dbReference>
<dbReference type="GO" id="GO:0009506">
    <property type="term" value="C:plasmodesma"/>
    <property type="evidence" value="ECO:0007005"/>
    <property type="project" value="TAIR"/>
</dbReference>
<dbReference type="GO" id="GO:0005524">
    <property type="term" value="F:ATP binding"/>
    <property type="evidence" value="ECO:0007669"/>
    <property type="project" value="UniProtKB-KW"/>
</dbReference>
<dbReference type="GO" id="GO:0004467">
    <property type="term" value="F:long-chain fatty acid-CoA ligase activity"/>
    <property type="evidence" value="ECO:0000314"/>
    <property type="project" value="UniProtKB"/>
</dbReference>
<dbReference type="GO" id="GO:0031957">
    <property type="term" value="F:very long-chain fatty acid-CoA ligase activity"/>
    <property type="evidence" value="ECO:0000314"/>
    <property type="project" value="TAIR"/>
</dbReference>
<dbReference type="GO" id="GO:0010143">
    <property type="term" value="P:cutin biosynthetic process"/>
    <property type="evidence" value="ECO:0000315"/>
    <property type="project" value="TAIR"/>
</dbReference>
<dbReference type="GO" id="GO:0050832">
    <property type="term" value="P:defense response to fungus"/>
    <property type="evidence" value="ECO:0000315"/>
    <property type="project" value="TAIR"/>
</dbReference>
<dbReference type="GO" id="GO:0006631">
    <property type="term" value="P:fatty acid metabolic process"/>
    <property type="evidence" value="ECO:0000304"/>
    <property type="project" value="UniProtKB"/>
</dbReference>
<dbReference type="GO" id="GO:0010311">
    <property type="term" value="P:lateral root formation"/>
    <property type="evidence" value="ECO:0000315"/>
    <property type="project" value="TAIR"/>
</dbReference>
<dbReference type="CDD" id="cd05927">
    <property type="entry name" value="LC-FACS_euk"/>
    <property type="match status" value="1"/>
</dbReference>
<dbReference type="Gene3D" id="3.40.50.12780">
    <property type="entry name" value="N-terminal domain of ligase-like"/>
    <property type="match status" value="1"/>
</dbReference>
<dbReference type="InterPro" id="IPR020845">
    <property type="entry name" value="AMP-binding_CS"/>
</dbReference>
<dbReference type="InterPro" id="IPR000873">
    <property type="entry name" value="AMP-dep_synth/lig_dom"/>
</dbReference>
<dbReference type="InterPro" id="IPR042099">
    <property type="entry name" value="ANL_N_sf"/>
</dbReference>
<dbReference type="InterPro" id="IPR045311">
    <property type="entry name" value="LC-FACS_euk"/>
</dbReference>
<dbReference type="PANTHER" id="PTHR43272:SF4">
    <property type="entry name" value="LONG CHAIN ACYL-COA SYNTHETASE 2"/>
    <property type="match status" value="1"/>
</dbReference>
<dbReference type="PANTHER" id="PTHR43272">
    <property type="entry name" value="LONG-CHAIN-FATTY-ACID--COA LIGASE"/>
    <property type="match status" value="1"/>
</dbReference>
<dbReference type="Pfam" id="PF00501">
    <property type="entry name" value="AMP-binding"/>
    <property type="match status" value="1"/>
</dbReference>
<dbReference type="SUPFAM" id="SSF56801">
    <property type="entry name" value="Acetyl-CoA synthetase-like"/>
    <property type="match status" value="1"/>
</dbReference>
<dbReference type="PROSITE" id="PS00455">
    <property type="entry name" value="AMP_BINDING"/>
    <property type="match status" value="1"/>
</dbReference>
<feature type="chain" id="PRO_0000401410" description="Long chain acyl-CoA synthetase 2">
    <location>
        <begin position="1"/>
        <end position="665"/>
    </location>
</feature>
<feature type="region of interest" description="Fatty acid-binding" evidence="2">
    <location>
        <begin position="496"/>
        <end position="520"/>
    </location>
</feature>
<feature type="binding site" evidence="2">
    <location>
        <begin position="228"/>
        <end position="239"/>
    </location>
    <ligand>
        <name>ATP</name>
        <dbReference type="ChEBI" id="CHEBI:30616"/>
    </ligand>
</feature>
<accession>Q9XIA9</accession>
<proteinExistence type="evidence at transcript level"/>
<name>LACS2_ARATH</name>
<comment type="function">
    <text evidence="4 5 6 7 9">Activation of long-chain fatty acids for both synthesis of cellular lipids, and degradation via beta-oxidation. Acts in the cutin pathway. Preferentially uses palmitate, palmitoleate, oleate and linoleate. Required for repression of lateral root formation through its role in cutin biosynthesis and subsequent aerial tissues permeability.</text>
</comment>
<comment type="catalytic activity">
    <reaction evidence="3">
        <text>a long-chain fatty acid + ATP + CoA = a long-chain fatty acyl-CoA + AMP + diphosphate</text>
        <dbReference type="Rhea" id="RHEA:15421"/>
        <dbReference type="ChEBI" id="CHEBI:30616"/>
        <dbReference type="ChEBI" id="CHEBI:33019"/>
        <dbReference type="ChEBI" id="CHEBI:57287"/>
        <dbReference type="ChEBI" id="CHEBI:57560"/>
        <dbReference type="ChEBI" id="CHEBI:83139"/>
        <dbReference type="ChEBI" id="CHEBI:456215"/>
        <dbReference type="EC" id="6.2.1.3"/>
    </reaction>
</comment>
<comment type="cofactor">
    <cofactor evidence="1">
        <name>Mg(2+)</name>
        <dbReference type="ChEBI" id="CHEBI:18420"/>
    </cofactor>
</comment>
<comment type="pathway">
    <text>Lipid metabolism; fatty acid metabolism.</text>
</comment>
<comment type="subcellular location">
    <subcellularLocation>
        <location evidence="11">Endoplasmic reticulum</location>
    </subcellularLocation>
</comment>
<comment type="tissue specificity">
    <text evidence="4 10">Expressed along the entire length of the stem, but expression was not entirely epidermal specific, with some expression found in internal cell layers as well. Was expressed in leave epidermal cells, flowers (sepals, petals, stamens, filaments and carpel), siliques and developing seeds. In roots, expression was detected in an internal cell layer, probably the endodermal layer.</text>
</comment>
<comment type="induction">
    <text evidence="8">Positively regulated by WIN1.</text>
</comment>
<comment type="disruption phenotype">
    <text evidence="4 6 7 11">Dwarf phenotype with smaller, wrinkled leaves and overall reduced vigor. Higher water loss rate and susceptibility to drought stress. Defective in the cuticular membrane. Strong resistance to virulent Botrytis cinerea and enhanced susceptibility to avirulent Pseudomonas syringae.</text>
</comment>
<comment type="similarity">
    <text evidence="12">Belongs to the ATP-dependent AMP-binding enzyme family.</text>
</comment>
<gene>
    <name type="primary">LACS2</name>
    <name type="synonym">BRE1</name>
    <name type="synonym">LRD2</name>
    <name type="synonym">SMA4</name>
    <name type="ordered locus">At1g49430</name>
    <name type="ORF">F13F21.14</name>
</gene>
<reference key="1">
    <citation type="journal article" date="2002" name="Plant Physiol.">
        <title>Arabidopsis contains nine long-chain acyl-coenzyme A synthetase genes that participate in fatty acid and glycerolipid metabolism.</title>
        <authorList>
            <person name="Shockey J.M."/>
            <person name="Fulda M.S."/>
            <person name="Browse J.A."/>
        </authorList>
    </citation>
    <scope>NUCLEOTIDE SEQUENCE [MRNA]</scope>
    <scope>GENE FAMILY</scope>
    <scope>ENZYME ACTIVITY</scope>
</reference>
<reference key="2">
    <citation type="journal article" date="2000" name="Nature">
        <title>Sequence and analysis of chromosome 1 of the plant Arabidopsis thaliana.</title>
        <authorList>
            <person name="Theologis A."/>
            <person name="Ecker J.R."/>
            <person name="Palm C.J."/>
            <person name="Federspiel N.A."/>
            <person name="Kaul S."/>
            <person name="White O."/>
            <person name="Alonso J."/>
            <person name="Altafi H."/>
            <person name="Araujo R."/>
            <person name="Bowman C.L."/>
            <person name="Brooks S.Y."/>
            <person name="Buehler E."/>
            <person name="Chan A."/>
            <person name="Chao Q."/>
            <person name="Chen H."/>
            <person name="Cheuk R.F."/>
            <person name="Chin C.W."/>
            <person name="Chung M.K."/>
            <person name="Conn L."/>
            <person name="Conway A.B."/>
            <person name="Conway A.R."/>
            <person name="Creasy T.H."/>
            <person name="Dewar K."/>
            <person name="Dunn P."/>
            <person name="Etgu P."/>
            <person name="Feldblyum T.V."/>
            <person name="Feng J.-D."/>
            <person name="Fong B."/>
            <person name="Fujii C.Y."/>
            <person name="Gill J.E."/>
            <person name="Goldsmith A.D."/>
            <person name="Haas B."/>
            <person name="Hansen N.F."/>
            <person name="Hughes B."/>
            <person name="Huizar L."/>
            <person name="Hunter J.L."/>
            <person name="Jenkins J."/>
            <person name="Johnson-Hopson C."/>
            <person name="Khan S."/>
            <person name="Khaykin E."/>
            <person name="Kim C.J."/>
            <person name="Koo H.L."/>
            <person name="Kremenetskaia I."/>
            <person name="Kurtz D.B."/>
            <person name="Kwan A."/>
            <person name="Lam B."/>
            <person name="Langin-Hooper S."/>
            <person name="Lee A."/>
            <person name="Lee J.M."/>
            <person name="Lenz C.A."/>
            <person name="Li J.H."/>
            <person name="Li Y.-P."/>
            <person name="Lin X."/>
            <person name="Liu S.X."/>
            <person name="Liu Z.A."/>
            <person name="Luros J.S."/>
            <person name="Maiti R."/>
            <person name="Marziali A."/>
            <person name="Militscher J."/>
            <person name="Miranda M."/>
            <person name="Nguyen M."/>
            <person name="Nierman W.C."/>
            <person name="Osborne B.I."/>
            <person name="Pai G."/>
            <person name="Peterson J."/>
            <person name="Pham P.K."/>
            <person name="Rizzo M."/>
            <person name="Rooney T."/>
            <person name="Rowley D."/>
            <person name="Sakano H."/>
            <person name="Salzberg S.L."/>
            <person name="Schwartz J.R."/>
            <person name="Shinn P."/>
            <person name="Southwick A.M."/>
            <person name="Sun H."/>
            <person name="Tallon L.J."/>
            <person name="Tambunga G."/>
            <person name="Toriumi M.J."/>
            <person name="Town C.D."/>
            <person name="Utterback T."/>
            <person name="Van Aken S."/>
            <person name="Vaysberg M."/>
            <person name="Vysotskaia V.S."/>
            <person name="Walker M."/>
            <person name="Wu D."/>
            <person name="Yu G."/>
            <person name="Fraser C.M."/>
            <person name="Venter J.C."/>
            <person name="Davis R.W."/>
        </authorList>
    </citation>
    <scope>NUCLEOTIDE SEQUENCE [LARGE SCALE GENOMIC DNA]</scope>
    <source>
        <strain>cv. Columbia</strain>
    </source>
</reference>
<reference key="3">
    <citation type="journal article" date="2017" name="Plant J.">
        <title>Araport11: a complete reannotation of the Arabidopsis thaliana reference genome.</title>
        <authorList>
            <person name="Cheng C.Y."/>
            <person name="Krishnakumar V."/>
            <person name="Chan A.P."/>
            <person name="Thibaud-Nissen F."/>
            <person name="Schobel S."/>
            <person name="Town C.D."/>
        </authorList>
    </citation>
    <scope>GENOME REANNOTATION</scope>
    <source>
        <strain>cv. Columbia</strain>
    </source>
</reference>
<reference key="4">
    <citation type="journal article" date="2003" name="Science">
        <title>Empirical analysis of transcriptional activity in the Arabidopsis genome.</title>
        <authorList>
            <person name="Yamada K."/>
            <person name="Lim J."/>
            <person name="Dale J.M."/>
            <person name="Chen H."/>
            <person name="Shinn P."/>
            <person name="Palm C.J."/>
            <person name="Southwick A.M."/>
            <person name="Wu H.C."/>
            <person name="Kim C.J."/>
            <person name="Nguyen M."/>
            <person name="Pham P.K."/>
            <person name="Cheuk R.F."/>
            <person name="Karlin-Newmann G."/>
            <person name="Liu S.X."/>
            <person name="Lam B."/>
            <person name="Sakano H."/>
            <person name="Wu T."/>
            <person name="Yu G."/>
            <person name="Miranda M."/>
            <person name="Quach H.L."/>
            <person name="Tripp M."/>
            <person name="Chang C.H."/>
            <person name="Lee J.M."/>
            <person name="Toriumi M.J."/>
            <person name="Chan M.M."/>
            <person name="Tang C.C."/>
            <person name="Onodera C.S."/>
            <person name="Deng J.M."/>
            <person name="Akiyama K."/>
            <person name="Ansari Y."/>
            <person name="Arakawa T."/>
            <person name="Banh J."/>
            <person name="Banno F."/>
            <person name="Bowser L."/>
            <person name="Brooks S.Y."/>
            <person name="Carninci P."/>
            <person name="Chao Q."/>
            <person name="Choy N."/>
            <person name="Enju A."/>
            <person name="Goldsmith A.D."/>
            <person name="Gurjal M."/>
            <person name="Hansen N.F."/>
            <person name="Hayashizaki Y."/>
            <person name="Johnson-Hopson C."/>
            <person name="Hsuan V.W."/>
            <person name="Iida K."/>
            <person name="Karnes M."/>
            <person name="Khan S."/>
            <person name="Koesema E."/>
            <person name="Ishida J."/>
            <person name="Jiang P.X."/>
            <person name="Jones T."/>
            <person name="Kawai J."/>
            <person name="Kamiya A."/>
            <person name="Meyers C."/>
            <person name="Nakajima M."/>
            <person name="Narusaka M."/>
            <person name="Seki M."/>
            <person name="Sakurai T."/>
            <person name="Satou M."/>
            <person name="Tamse R."/>
            <person name="Vaysberg M."/>
            <person name="Wallender E.K."/>
            <person name="Wong C."/>
            <person name="Yamamura Y."/>
            <person name="Yuan S."/>
            <person name="Shinozaki K."/>
            <person name="Davis R.W."/>
            <person name="Theologis A."/>
            <person name="Ecker J.R."/>
        </authorList>
    </citation>
    <scope>NUCLEOTIDE SEQUENCE [LARGE SCALE MRNA]</scope>
    <source>
        <strain>cv. Columbia</strain>
    </source>
</reference>
<reference key="5">
    <citation type="journal article" date="2003" name="Plant Physiol.">
        <title>Arabidopsis contains a large superfamily of acyl-activating enzymes. Phylogenetic and biochemical analysis reveals a new class of acyl-coenzyme a synthetases.</title>
        <authorList>
            <person name="Shockey J.M."/>
            <person name="Fulda M.S."/>
            <person name="Browse J."/>
        </authorList>
    </citation>
    <scope>GENE FAMILY ORGANIZATION</scope>
</reference>
<reference key="6">
    <citation type="journal article" date="2004" name="Plant Cell">
        <title>The acyl-CoA synthetase encoded by LACS2 is essential for normal cuticle development in Arabidopsis.</title>
        <authorList>
            <person name="Schnurr J."/>
            <person name="Shockey J."/>
            <person name="Browse J."/>
        </authorList>
    </citation>
    <scope>FUNCTION</scope>
    <scope>DISRUPTION PHENOTYPE</scope>
    <scope>TISSUE SPECIFICITY</scope>
</reference>
<reference key="7">
    <citation type="journal article" date="2005" name="Plant J.">
        <title>Osmotic regulation of root system architecture.</title>
        <authorList>
            <person name="Deak K.I."/>
            <person name="Malamy J."/>
        </authorList>
    </citation>
    <scope>FUNCTION</scope>
</reference>
<reference key="8">
    <citation type="journal article" date="2007" name="EMBO J.">
        <title>A permeable cuticle in Arabidopsis leads to a strong resistance to Botrytis cinerea.</title>
        <authorList>
            <person name="Bessire M."/>
            <person name="Chassot C."/>
            <person name="Jacquat A.C."/>
            <person name="Humphry M."/>
            <person name="Borel S."/>
            <person name="Petetot J.M."/>
            <person name="Metraux J.P."/>
            <person name="Nawrath C."/>
        </authorList>
    </citation>
    <scope>DISRUPTION PHENOTYPE</scope>
    <scope>FUNCTION</scope>
</reference>
<reference key="9">
    <citation type="journal article" date="2007" name="Plant Cell">
        <title>The transcription factor WIN1/SHN1 regulates Cutin biosynthesis in Arabidopsis thaliana.</title>
        <authorList>
            <person name="Kannangara R."/>
            <person name="Branigan C."/>
            <person name="Liu Y."/>
            <person name="Penfield T."/>
            <person name="Rao V."/>
            <person name="Mouille G."/>
            <person name="Hoefte H."/>
            <person name="Pauly M."/>
            <person name="Riechmann J.L."/>
            <person name="Broun P."/>
        </authorList>
    </citation>
    <scope>INDUCTION BY WIN1</scope>
</reference>
<reference key="10">
    <citation type="journal article" date="2007" name="Plant Physiol.">
        <title>Mutations in LACS2, a long-chain acyl-coenzyme A synthetase, enhance susceptibility to avirulent Pseudomonas syringae but confer resistance to Botrytis cinerea in Arabidopsis.</title>
        <authorList>
            <person name="Tang D."/>
            <person name="Simonich M.T."/>
            <person name="Innes R.W."/>
        </authorList>
    </citation>
    <scope>DISRUPTION PHENOTYPE</scope>
    <scope>FUNCTION</scope>
</reference>
<reference key="11">
    <citation type="journal article" date="2008" name="Plant Cell">
        <title>Root system architecture in Arabidopsis grown in culture is regulated by sucrose uptake in the aerial tissues.</title>
        <authorList>
            <person name="Macgregor D.R."/>
            <person name="Deak K.I."/>
            <person name="Ingram P.A."/>
            <person name="Malamy J.E."/>
        </authorList>
    </citation>
    <scope>FUNCTION</scope>
</reference>
<reference key="12">
    <citation type="journal article" date="2009" name="Plant J.">
        <title>Arabidopsis CER8 encodes LONG-CHAIN ACYL-COA SYNTHETASE 1 (LACS1) that has overlapping functions with LACS2 in plant wax and cutin synthesis.</title>
        <authorList>
            <person name="Lue S."/>
            <person name="Song T."/>
            <person name="Kosma D.K."/>
            <person name="Parsons E.P."/>
            <person name="Rowland O."/>
            <person name="Jenks M.A."/>
        </authorList>
    </citation>
    <scope>TISSUE SPECIFICITY</scope>
</reference>
<reference key="13">
    <citation type="journal article" date="2010" name="Planta">
        <title>Organ fusion and defective cuticle function in a lacs1 lacs2 double mutant of Arabidopsis.</title>
        <authorList>
            <person name="Weng H."/>
            <person name="Molina I."/>
            <person name="Shockey J."/>
            <person name="Browse J."/>
        </authorList>
    </citation>
    <scope>SUBCELLULAR LOCATION</scope>
    <scope>DISRUPTION PHENOTYPE</scope>
</reference>
<organism>
    <name type="scientific">Arabidopsis thaliana</name>
    <name type="common">Mouse-ear cress</name>
    <dbReference type="NCBI Taxonomy" id="3702"/>
    <lineage>
        <taxon>Eukaryota</taxon>
        <taxon>Viridiplantae</taxon>
        <taxon>Streptophyta</taxon>
        <taxon>Embryophyta</taxon>
        <taxon>Tracheophyta</taxon>
        <taxon>Spermatophyta</taxon>
        <taxon>Magnoliopsida</taxon>
        <taxon>eudicotyledons</taxon>
        <taxon>Gunneridae</taxon>
        <taxon>Pentapetalae</taxon>
        <taxon>rosids</taxon>
        <taxon>malvids</taxon>
        <taxon>Brassicales</taxon>
        <taxon>Brassicaceae</taxon>
        <taxon>Camelineae</taxon>
        <taxon>Arabidopsis</taxon>
    </lineage>
</organism>
<keyword id="KW-0067">ATP-binding</keyword>
<keyword id="KW-0256">Endoplasmic reticulum</keyword>
<keyword id="KW-0276">Fatty acid metabolism</keyword>
<keyword id="KW-0436">Ligase</keyword>
<keyword id="KW-0443">Lipid metabolism</keyword>
<keyword id="KW-0460">Magnesium</keyword>
<keyword id="KW-0547">Nucleotide-binding</keyword>
<keyword id="KW-1185">Reference proteome</keyword>
<evidence type="ECO:0000250" key="1"/>
<evidence type="ECO:0000255" key="2"/>
<evidence type="ECO:0000269" key="3">
    <source>
    </source>
</evidence>
<evidence type="ECO:0000269" key="4">
    <source>
    </source>
</evidence>
<evidence type="ECO:0000269" key="5">
    <source>
    </source>
</evidence>
<evidence type="ECO:0000269" key="6">
    <source>
    </source>
</evidence>
<evidence type="ECO:0000269" key="7">
    <source>
    </source>
</evidence>
<evidence type="ECO:0000269" key="8">
    <source>
    </source>
</evidence>
<evidence type="ECO:0000269" key="9">
    <source>
    </source>
</evidence>
<evidence type="ECO:0000269" key="10">
    <source>
    </source>
</evidence>
<evidence type="ECO:0000269" key="11">
    <source>
    </source>
</evidence>
<evidence type="ECO:0000305" key="12"/>
<protein>
    <recommendedName>
        <fullName>Long chain acyl-CoA synthetase 2</fullName>
        <ecNumber>6.2.1.3</ecNumber>
    </recommendedName>
    <alternativeName>
        <fullName>Protein Botrytis resistant 1</fullName>
    </alternativeName>
    <alternativeName>
        <fullName>Protein LATERAL ROOT DEVELOPMENT 2</fullName>
    </alternativeName>
</protein>
<sequence>MSLAADNVLLVEEGRPATAEHPSAGPVYRCKYAKDGLLDLPTDIDSPWQFFSEAVKKYPNEQMLGQRVTTDSKVGPYTWITYKEAHDAAIRIGSAIRSRGVDPGHCCGIYGANCPEWIIAMEACMSQGITYVPLYDSLGVNAVEFIINHAEVSLVFVQEKTVSSILSCQKGCSSNLKTIVSFGEVSSTQKEEAKNQCVSLFSWNEFSLMGNLDEANLPRKRKTDICTIMYTSGTTGEPKGVILNNAAISVQVLSIDKMLEVTDRSCDTSDVFFSYLPLAHCYDQVMEIYFLSRGSSVGYWRGDIRYLMDDVQALKPTVFCGVPRVYDKLYAGIMQKISASGLIRKKLFDFAYNYKLGNMRKGFSQEEASPRLDRLMFDKIKEALGGRAHMLLSGAAPLPRHVEEFLRIIPASNLSQGYGLTESCGGSFTTLAGVFSMVGTVGVPMPTVEARLVSVPEMGYDAFSADVPRGEICLRGNSMFSGYHKRQDLTDQVLIDGWFHTGDIGEWQEDGSMKIIDRKKNIFKLSQGEYVAVENLENTYSRCPLIAQIWVYGNSFESFLVGVVVPDRKAIEDWAKLNYQSPNDFESLCQNLKAQKYFLDELNSTAKQYQLKGFEMLKAIHLEPNPFDIERDLITPTFKLKRPQLLQHYKGIVDQLYSEAKRSMA</sequence>